<name>RL3_BORPE</name>
<keyword id="KW-0488">Methylation</keyword>
<keyword id="KW-1185">Reference proteome</keyword>
<keyword id="KW-0687">Ribonucleoprotein</keyword>
<keyword id="KW-0689">Ribosomal protein</keyword>
<keyword id="KW-0694">RNA-binding</keyword>
<keyword id="KW-0699">rRNA-binding</keyword>
<evidence type="ECO:0000255" key="1">
    <source>
        <dbReference type="HAMAP-Rule" id="MF_01325"/>
    </source>
</evidence>
<evidence type="ECO:0000256" key="2">
    <source>
        <dbReference type="SAM" id="MobiDB-lite"/>
    </source>
</evidence>
<evidence type="ECO:0000305" key="3"/>
<gene>
    <name evidence="1" type="primary">rplC</name>
    <name type="ordered locus">BP3613</name>
</gene>
<accession>Q7VTD3</accession>
<dbReference type="EMBL" id="BX640422">
    <property type="protein sequence ID" value="CAE43871.1"/>
    <property type="status" value="ALT_INIT"/>
    <property type="molecule type" value="Genomic_DNA"/>
</dbReference>
<dbReference type="SMR" id="Q7VTD3"/>
<dbReference type="STRING" id="257313.BP3613"/>
<dbReference type="PaxDb" id="257313-BP3613"/>
<dbReference type="KEGG" id="bpe:BP3613"/>
<dbReference type="eggNOG" id="COG0087">
    <property type="taxonomic scope" value="Bacteria"/>
</dbReference>
<dbReference type="HOGENOM" id="CLU_044142_4_1_4"/>
<dbReference type="Proteomes" id="UP000002676">
    <property type="component" value="Chromosome"/>
</dbReference>
<dbReference type="GO" id="GO:0022625">
    <property type="term" value="C:cytosolic large ribosomal subunit"/>
    <property type="evidence" value="ECO:0007669"/>
    <property type="project" value="TreeGrafter"/>
</dbReference>
<dbReference type="GO" id="GO:0019843">
    <property type="term" value="F:rRNA binding"/>
    <property type="evidence" value="ECO:0007669"/>
    <property type="project" value="UniProtKB-UniRule"/>
</dbReference>
<dbReference type="GO" id="GO:0003735">
    <property type="term" value="F:structural constituent of ribosome"/>
    <property type="evidence" value="ECO:0007669"/>
    <property type="project" value="InterPro"/>
</dbReference>
<dbReference type="GO" id="GO:0006412">
    <property type="term" value="P:translation"/>
    <property type="evidence" value="ECO:0007669"/>
    <property type="project" value="UniProtKB-UniRule"/>
</dbReference>
<dbReference type="FunFam" id="2.40.30.10:FF:000004">
    <property type="entry name" value="50S ribosomal protein L3"/>
    <property type="match status" value="1"/>
</dbReference>
<dbReference type="FunFam" id="3.30.160.810:FF:000001">
    <property type="entry name" value="50S ribosomal protein L3"/>
    <property type="match status" value="1"/>
</dbReference>
<dbReference type="Gene3D" id="3.30.160.810">
    <property type="match status" value="1"/>
</dbReference>
<dbReference type="Gene3D" id="2.40.30.10">
    <property type="entry name" value="Translation factors"/>
    <property type="match status" value="1"/>
</dbReference>
<dbReference type="HAMAP" id="MF_01325_B">
    <property type="entry name" value="Ribosomal_uL3_B"/>
    <property type="match status" value="1"/>
</dbReference>
<dbReference type="InterPro" id="IPR000597">
    <property type="entry name" value="Ribosomal_uL3"/>
</dbReference>
<dbReference type="InterPro" id="IPR019927">
    <property type="entry name" value="Ribosomal_uL3_bac/org-type"/>
</dbReference>
<dbReference type="InterPro" id="IPR019926">
    <property type="entry name" value="Ribosomal_uL3_CS"/>
</dbReference>
<dbReference type="InterPro" id="IPR009000">
    <property type="entry name" value="Transl_B-barrel_sf"/>
</dbReference>
<dbReference type="NCBIfam" id="TIGR03625">
    <property type="entry name" value="L3_bact"/>
    <property type="match status" value="1"/>
</dbReference>
<dbReference type="PANTHER" id="PTHR11229">
    <property type="entry name" value="50S RIBOSOMAL PROTEIN L3"/>
    <property type="match status" value="1"/>
</dbReference>
<dbReference type="PANTHER" id="PTHR11229:SF16">
    <property type="entry name" value="LARGE RIBOSOMAL SUBUNIT PROTEIN UL3C"/>
    <property type="match status" value="1"/>
</dbReference>
<dbReference type="Pfam" id="PF00297">
    <property type="entry name" value="Ribosomal_L3"/>
    <property type="match status" value="1"/>
</dbReference>
<dbReference type="SUPFAM" id="SSF50447">
    <property type="entry name" value="Translation proteins"/>
    <property type="match status" value="1"/>
</dbReference>
<dbReference type="PROSITE" id="PS00474">
    <property type="entry name" value="RIBOSOMAL_L3"/>
    <property type="match status" value="1"/>
</dbReference>
<reference key="1">
    <citation type="journal article" date="2003" name="Nat. Genet.">
        <title>Comparative analysis of the genome sequences of Bordetella pertussis, Bordetella parapertussis and Bordetella bronchiseptica.</title>
        <authorList>
            <person name="Parkhill J."/>
            <person name="Sebaihia M."/>
            <person name="Preston A."/>
            <person name="Murphy L.D."/>
            <person name="Thomson N.R."/>
            <person name="Harris D.E."/>
            <person name="Holden M.T.G."/>
            <person name="Churcher C.M."/>
            <person name="Bentley S.D."/>
            <person name="Mungall K.L."/>
            <person name="Cerdeno-Tarraga A.-M."/>
            <person name="Temple L."/>
            <person name="James K.D."/>
            <person name="Harris B."/>
            <person name="Quail M.A."/>
            <person name="Achtman M."/>
            <person name="Atkin R."/>
            <person name="Baker S."/>
            <person name="Basham D."/>
            <person name="Bason N."/>
            <person name="Cherevach I."/>
            <person name="Chillingworth T."/>
            <person name="Collins M."/>
            <person name="Cronin A."/>
            <person name="Davis P."/>
            <person name="Doggett J."/>
            <person name="Feltwell T."/>
            <person name="Goble A."/>
            <person name="Hamlin N."/>
            <person name="Hauser H."/>
            <person name="Holroyd S."/>
            <person name="Jagels K."/>
            <person name="Leather S."/>
            <person name="Moule S."/>
            <person name="Norberczak H."/>
            <person name="O'Neil S."/>
            <person name="Ormond D."/>
            <person name="Price C."/>
            <person name="Rabbinowitsch E."/>
            <person name="Rutter S."/>
            <person name="Sanders M."/>
            <person name="Saunders D."/>
            <person name="Seeger K."/>
            <person name="Sharp S."/>
            <person name="Simmonds M."/>
            <person name="Skelton J."/>
            <person name="Squares R."/>
            <person name="Squares S."/>
            <person name="Stevens K."/>
            <person name="Unwin L."/>
            <person name="Whitehead S."/>
            <person name="Barrell B.G."/>
            <person name="Maskell D.J."/>
        </authorList>
    </citation>
    <scope>NUCLEOTIDE SEQUENCE [LARGE SCALE GENOMIC DNA]</scope>
    <source>
        <strain>Tohama I / ATCC BAA-589 / NCTC 13251</strain>
    </source>
</reference>
<sequence>MEKTMSNSTPTPAAHRLGLVGRKVGMTRIFTEDGESIPVTVLDVSNNRVTQVKSLESDGYAAIQVTYGTRRATRVVKPQAGHYAKAGAEAGSILKEFRLDPARAAEFAAGAVIAVESVFEAGQQVDVTGTSIGKGFAGTIKRHNFGSQRASHGNSRSHRVPGSIGQAQDPGRIFPGKRMSGHMGDVTRTVQNLDVVRVDAERGLLMVKGAVPGHAGGDVIVRPAVKAPAKKGA</sequence>
<protein>
    <recommendedName>
        <fullName evidence="1">Large ribosomal subunit protein uL3</fullName>
    </recommendedName>
    <alternativeName>
        <fullName evidence="3">50S ribosomal protein L3</fullName>
    </alternativeName>
</protein>
<organism>
    <name type="scientific">Bordetella pertussis (strain Tohama I / ATCC BAA-589 / NCTC 13251)</name>
    <dbReference type="NCBI Taxonomy" id="257313"/>
    <lineage>
        <taxon>Bacteria</taxon>
        <taxon>Pseudomonadati</taxon>
        <taxon>Pseudomonadota</taxon>
        <taxon>Betaproteobacteria</taxon>
        <taxon>Burkholderiales</taxon>
        <taxon>Alcaligenaceae</taxon>
        <taxon>Bordetella</taxon>
    </lineage>
</organism>
<proteinExistence type="inferred from homology"/>
<feature type="chain" id="PRO_0000077072" description="Large ribosomal subunit protein uL3">
    <location>
        <begin position="1"/>
        <end position="233"/>
    </location>
</feature>
<feature type="region of interest" description="Disordered" evidence="2">
    <location>
        <begin position="146"/>
        <end position="171"/>
    </location>
</feature>
<feature type="modified residue" description="N5-methylglutamine" evidence="1">
    <location>
        <position position="168"/>
    </location>
</feature>
<comment type="function">
    <text evidence="1">One of the primary rRNA binding proteins, it binds directly near the 3'-end of the 23S rRNA, where it nucleates assembly of the 50S subunit.</text>
</comment>
<comment type="subunit">
    <text evidence="1">Part of the 50S ribosomal subunit. Forms a cluster with proteins L14 and L19.</text>
</comment>
<comment type="PTM">
    <text evidence="1">Methylated by PrmB.</text>
</comment>
<comment type="similarity">
    <text evidence="1">Belongs to the universal ribosomal protein uL3 family.</text>
</comment>
<comment type="sequence caution" evidence="3">
    <conflict type="erroneous initiation">
        <sequence resource="EMBL-CDS" id="CAE43871"/>
    </conflict>
</comment>